<dbReference type="EC" id="3.5.1.96" evidence="1"/>
<dbReference type="EMBL" id="BX571869">
    <property type="protein sequence ID" value="CAE15480.1"/>
    <property type="molecule type" value="Genomic_DNA"/>
</dbReference>
<dbReference type="RefSeq" id="WP_011147322.1">
    <property type="nucleotide sequence ID" value="NC_005126.1"/>
</dbReference>
<dbReference type="SMR" id="Q7N2H1"/>
<dbReference type="STRING" id="243265.plu3106"/>
<dbReference type="GeneID" id="48849368"/>
<dbReference type="KEGG" id="plu:plu3106"/>
<dbReference type="eggNOG" id="COG2988">
    <property type="taxonomic scope" value="Bacteria"/>
</dbReference>
<dbReference type="HOGENOM" id="CLU_071608_0_0_6"/>
<dbReference type="OrthoDB" id="5290473at2"/>
<dbReference type="UniPathway" id="UPA00185">
    <property type="reaction ID" value="UER00283"/>
</dbReference>
<dbReference type="Proteomes" id="UP000002514">
    <property type="component" value="Chromosome"/>
</dbReference>
<dbReference type="GO" id="GO:0016788">
    <property type="term" value="F:hydrolase activity, acting on ester bonds"/>
    <property type="evidence" value="ECO:0007669"/>
    <property type="project" value="UniProtKB-UniRule"/>
</dbReference>
<dbReference type="GO" id="GO:0009017">
    <property type="term" value="F:succinylglutamate desuccinylase activity"/>
    <property type="evidence" value="ECO:0007669"/>
    <property type="project" value="UniProtKB-EC"/>
</dbReference>
<dbReference type="GO" id="GO:0008270">
    <property type="term" value="F:zinc ion binding"/>
    <property type="evidence" value="ECO:0007669"/>
    <property type="project" value="UniProtKB-UniRule"/>
</dbReference>
<dbReference type="GO" id="GO:0019544">
    <property type="term" value="P:arginine catabolic process to glutamate"/>
    <property type="evidence" value="ECO:0007669"/>
    <property type="project" value="UniProtKB-UniRule"/>
</dbReference>
<dbReference type="GO" id="GO:0019545">
    <property type="term" value="P:arginine catabolic process to succinate"/>
    <property type="evidence" value="ECO:0007669"/>
    <property type="project" value="UniProtKB-UniRule"/>
</dbReference>
<dbReference type="CDD" id="cd03855">
    <property type="entry name" value="M14_ASTE"/>
    <property type="match status" value="1"/>
</dbReference>
<dbReference type="Gene3D" id="3.40.630.10">
    <property type="entry name" value="Zn peptidases"/>
    <property type="match status" value="1"/>
</dbReference>
<dbReference type="HAMAP" id="MF_00767">
    <property type="entry name" value="Arg_catab_AstE"/>
    <property type="match status" value="1"/>
</dbReference>
<dbReference type="InterPro" id="IPR050178">
    <property type="entry name" value="AspA/AstE_fam"/>
</dbReference>
<dbReference type="InterPro" id="IPR055438">
    <property type="entry name" value="AstE_AspA_cat"/>
</dbReference>
<dbReference type="InterPro" id="IPR007036">
    <property type="entry name" value="Aste_AspA_hybrid_dom"/>
</dbReference>
<dbReference type="InterPro" id="IPR016681">
    <property type="entry name" value="SuccinylGlu_desuccinylase"/>
</dbReference>
<dbReference type="NCBIfam" id="TIGR03242">
    <property type="entry name" value="arg_catab_astE"/>
    <property type="match status" value="1"/>
</dbReference>
<dbReference type="NCBIfam" id="NF003706">
    <property type="entry name" value="PRK05324.1"/>
    <property type="match status" value="1"/>
</dbReference>
<dbReference type="PANTHER" id="PTHR15162">
    <property type="entry name" value="ASPARTOACYLASE"/>
    <property type="match status" value="1"/>
</dbReference>
<dbReference type="PANTHER" id="PTHR15162:SF7">
    <property type="entry name" value="SUCCINYLGLUTAMATE DESUCCINYLASE"/>
    <property type="match status" value="1"/>
</dbReference>
<dbReference type="Pfam" id="PF24827">
    <property type="entry name" value="AstE_AspA_cat"/>
    <property type="match status" value="1"/>
</dbReference>
<dbReference type="Pfam" id="PF04952">
    <property type="entry name" value="AstE_AspA_hybrid"/>
    <property type="match status" value="1"/>
</dbReference>
<dbReference type="PIRSF" id="PIRSF017020">
    <property type="entry name" value="AstE"/>
    <property type="match status" value="1"/>
</dbReference>
<dbReference type="SUPFAM" id="SSF53187">
    <property type="entry name" value="Zn-dependent exopeptidases"/>
    <property type="match status" value="1"/>
</dbReference>
<feature type="chain" id="PRO_0000174642" description="Succinylglutamate desuccinylase">
    <location>
        <begin position="1"/>
        <end position="325"/>
    </location>
</feature>
<feature type="active site" evidence="1">
    <location>
        <position position="211"/>
    </location>
</feature>
<feature type="binding site" evidence="1">
    <location>
        <position position="51"/>
    </location>
    <ligand>
        <name>Zn(2+)</name>
        <dbReference type="ChEBI" id="CHEBI:29105"/>
    </ligand>
</feature>
<feature type="binding site" evidence="1">
    <location>
        <position position="54"/>
    </location>
    <ligand>
        <name>Zn(2+)</name>
        <dbReference type="ChEBI" id="CHEBI:29105"/>
    </ligand>
</feature>
<feature type="binding site" evidence="1">
    <location>
        <position position="148"/>
    </location>
    <ligand>
        <name>Zn(2+)</name>
        <dbReference type="ChEBI" id="CHEBI:29105"/>
    </ligand>
</feature>
<proteinExistence type="inferred from homology"/>
<protein>
    <recommendedName>
        <fullName evidence="1">Succinylglutamate desuccinylase</fullName>
        <ecNumber evidence="1">3.5.1.96</ecNumber>
    </recommendedName>
</protein>
<sequence>MDLLTLLLEKKLADHLTFPETINAHWLAEGVLQLIPHEEGNRSLVISAGIHGNETAPIEILIQLLAQLAEGTLALKNNVLIIFGNLPAMRTNRRYLHDDLNRMFGGRYLNFPLGNERSRAAELENVVNRFFAEPSVSSTNIRWHIDLHTAIRASHHEQFALLPAQNRPFSAEFMQWLHDSDIDALVYHREKAGTFSHFLSEKFGADSCTMEMGKAMPFGENDLTRFQKITDALYGLISLSQITARIKFELKHYQVINSIIKSHDSFQLHIPADTLNFTELPEGFEIASQHDHHWKIKFPAKFILFPNAEVANGLRAGLLLALNKK</sequence>
<name>ASTE_PHOLL</name>
<accession>Q7N2H1</accession>
<organism>
    <name type="scientific">Photorhabdus laumondii subsp. laumondii (strain DSM 15139 / CIP 105565 / TT01)</name>
    <name type="common">Photorhabdus luminescens subsp. laumondii</name>
    <dbReference type="NCBI Taxonomy" id="243265"/>
    <lineage>
        <taxon>Bacteria</taxon>
        <taxon>Pseudomonadati</taxon>
        <taxon>Pseudomonadota</taxon>
        <taxon>Gammaproteobacteria</taxon>
        <taxon>Enterobacterales</taxon>
        <taxon>Morganellaceae</taxon>
        <taxon>Photorhabdus</taxon>
    </lineage>
</organism>
<keyword id="KW-0056">Arginine metabolism</keyword>
<keyword id="KW-0378">Hydrolase</keyword>
<keyword id="KW-0479">Metal-binding</keyword>
<keyword id="KW-1185">Reference proteome</keyword>
<keyword id="KW-0862">Zinc</keyword>
<evidence type="ECO:0000255" key="1">
    <source>
        <dbReference type="HAMAP-Rule" id="MF_00767"/>
    </source>
</evidence>
<comment type="function">
    <text evidence="1">Transforms N(2)-succinylglutamate into succinate and glutamate.</text>
</comment>
<comment type="catalytic activity">
    <reaction evidence="1">
        <text>N-succinyl-L-glutamate + H2O = L-glutamate + succinate</text>
        <dbReference type="Rhea" id="RHEA:15169"/>
        <dbReference type="ChEBI" id="CHEBI:15377"/>
        <dbReference type="ChEBI" id="CHEBI:29985"/>
        <dbReference type="ChEBI" id="CHEBI:30031"/>
        <dbReference type="ChEBI" id="CHEBI:58763"/>
        <dbReference type="EC" id="3.5.1.96"/>
    </reaction>
</comment>
<comment type="cofactor">
    <cofactor evidence="1">
        <name>Zn(2+)</name>
        <dbReference type="ChEBI" id="CHEBI:29105"/>
    </cofactor>
    <text evidence="1">Binds 1 zinc ion per subunit.</text>
</comment>
<comment type="pathway">
    <text evidence="1">Amino-acid degradation; L-arginine degradation via AST pathway; L-glutamate and succinate from L-arginine: step 5/5.</text>
</comment>
<comment type="similarity">
    <text evidence="1">Belongs to the AspA/AstE family. Succinylglutamate desuccinylase subfamily.</text>
</comment>
<gene>
    <name evidence="1" type="primary">astE</name>
    <name type="ordered locus">plu3106</name>
</gene>
<reference key="1">
    <citation type="journal article" date="2003" name="Nat. Biotechnol.">
        <title>The genome sequence of the entomopathogenic bacterium Photorhabdus luminescens.</title>
        <authorList>
            <person name="Duchaud E."/>
            <person name="Rusniok C."/>
            <person name="Frangeul L."/>
            <person name="Buchrieser C."/>
            <person name="Givaudan A."/>
            <person name="Taourit S."/>
            <person name="Bocs S."/>
            <person name="Boursaux-Eude C."/>
            <person name="Chandler M."/>
            <person name="Charles J.-F."/>
            <person name="Dassa E."/>
            <person name="Derose R."/>
            <person name="Derzelle S."/>
            <person name="Freyssinet G."/>
            <person name="Gaudriault S."/>
            <person name="Medigue C."/>
            <person name="Lanois A."/>
            <person name="Powell K."/>
            <person name="Siguier P."/>
            <person name="Vincent R."/>
            <person name="Wingate V."/>
            <person name="Zouine M."/>
            <person name="Glaser P."/>
            <person name="Boemare N."/>
            <person name="Danchin A."/>
            <person name="Kunst F."/>
        </authorList>
    </citation>
    <scope>NUCLEOTIDE SEQUENCE [LARGE SCALE GENOMIC DNA]</scope>
    <source>
        <strain>DSM 15139 / CIP 105565 / TT01</strain>
    </source>
</reference>